<evidence type="ECO:0000255" key="1">
    <source>
        <dbReference type="HAMAP-Rule" id="MF_01609"/>
    </source>
</evidence>
<comment type="function">
    <text evidence="1">ATP-dependent carboxylate-amine ligase which exhibits weak glutamate--cysteine ligase activity.</text>
</comment>
<comment type="catalytic activity">
    <reaction evidence="1">
        <text>L-cysteine + L-glutamate + ATP = gamma-L-glutamyl-L-cysteine + ADP + phosphate + H(+)</text>
        <dbReference type="Rhea" id="RHEA:13285"/>
        <dbReference type="ChEBI" id="CHEBI:15378"/>
        <dbReference type="ChEBI" id="CHEBI:29985"/>
        <dbReference type="ChEBI" id="CHEBI:30616"/>
        <dbReference type="ChEBI" id="CHEBI:35235"/>
        <dbReference type="ChEBI" id="CHEBI:43474"/>
        <dbReference type="ChEBI" id="CHEBI:58173"/>
        <dbReference type="ChEBI" id="CHEBI:456216"/>
        <dbReference type="EC" id="6.3.2.2"/>
    </reaction>
</comment>
<comment type="similarity">
    <text evidence="1">Belongs to the glutamate--cysteine ligase type 2 family. YbdK subfamily.</text>
</comment>
<organism>
    <name type="scientific">Trichormus variabilis (strain ATCC 29413 / PCC 7937)</name>
    <name type="common">Anabaena variabilis</name>
    <dbReference type="NCBI Taxonomy" id="240292"/>
    <lineage>
        <taxon>Bacteria</taxon>
        <taxon>Bacillati</taxon>
        <taxon>Cyanobacteriota</taxon>
        <taxon>Cyanophyceae</taxon>
        <taxon>Nostocales</taxon>
        <taxon>Nostocaceae</taxon>
        <taxon>Trichormus</taxon>
    </lineage>
</organism>
<proteinExistence type="inferred from homology"/>
<accession>Q3M5M3</accession>
<gene>
    <name type="ordered locus">Ava_4113</name>
</gene>
<sequence>MGDIEFKSSPEFSLGMEIELQLLNPDTLQLVDGISPLLAQTPENSWIQPEFNQAMVEIASQVCSNIPELEANIVAILRDLKTRCQALGMTICTAGTYPCCDRFASITPIPRYLSQQNTSGYLADLMMTCALQLHVGMPSGDVAIDIMGRLKPYLPILLALSASSPFWWGHDTSFASFRQRFLSSMRTYGICPTFKNWQDFTNFFATAQNAGMFEIIRDIHWDLRPQPDFGTLEVRVMDAQPTIKESMMLAAFIHSLIVDMYHHSQGKQTEFLLTPLPWLIERENYFRASRWGLDANYIEDEQGNSRPIRNIVKDILNVLAETADTLGNSSYLFQLEKRLDQGASYIRQRRVFESTGSVKAVVASLVSELEAELAIKSRQEAVAYGWL</sequence>
<name>GCS2_TRIV2</name>
<keyword id="KW-0067">ATP-binding</keyword>
<keyword id="KW-0436">Ligase</keyword>
<keyword id="KW-0547">Nucleotide-binding</keyword>
<dbReference type="EC" id="6.3.2.2" evidence="1"/>
<dbReference type="EMBL" id="CP000117">
    <property type="protein sequence ID" value="ABA23713.1"/>
    <property type="molecule type" value="Genomic_DNA"/>
</dbReference>
<dbReference type="SMR" id="Q3M5M3"/>
<dbReference type="STRING" id="240292.Ava_4113"/>
<dbReference type="KEGG" id="ava:Ava_4113"/>
<dbReference type="eggNOG" id="COG2170">
    <property type="taxonomic scope" value="Bacteria"/>
</dbReference>
<dbReference type="HOGENOM" id="CLU_044848_1_1_3"/>
<dbReference type="Proteomes" id="UP000002533">
    <property type="component" value="Chromosome"/>
</dbReference>
<dbReference type="GO" id="GO:0005524">
    <property type="term" value="F:ATP binding"/>
    <property type="evidence" value="ECO:0007669"/>
    <property type="project" value="UniProtKB-KW"/>
</dbReference>
<dbReference type="GO" id="GO:0004357">
    <property type="term" value="F:glutamate-cysteine ligase activity"/>
    <property type="evidence" value="ECO:0007669"/>
    <property type="project" value="UniProtKB-EC"/>
</dbReference>
<dbReference type="GO" id="GO:0042398">
    <property type="term" value="P:modified amino acid biosynthetic process"/>
    <property type="evidence" value="ECO:0007669"/>
    <property type="project" value="InterPro"/>
</dbReference>
<dbReference type="Gene3D" id="3.30.590.20">
    <property type="match status" value="1"/>
</dbReference>
<dbReference type="HAMAP" id="MF_01609">
    <property type="entry name" value="Glu_cys_ligase_2"/>
    <property type="match status" value="1"/>
</dbReference>
<dbReference type="InterPro" id="IPR050141">
    <property type="entry name" value="GCL_type2/YbdK_subfam"/>
</dbReference>
<dbReference type="InterPro" id="IPR006336">
    <property type="entry name" value="GCS2"/>
</dbReference>
<dbReference type="InterPro" id="IPR014746">
    <property type="entry name" value="Gln_synth/guanido_kin_cat_dom"/>
</dbReference>
<dbReference type="InterPro" id="IPR011793">
    <property type="entry name" value="YbdK"/>
</dbReference>
<dbReference type="NCBIfam" id="TIGR02050">
    <property type="entry name" value="gshA_cyan_rel"/>
    <property type="match status" value="1"/>
</dbReference>
<dbReference type="PANTHER" id="PTHR36510">
    <property type="entry name" value="GLUTAMATE--CYSTEINE LIGASE 2-RELATED"/>
    <property type="match status" value="1"/>
</dbReference>
<dbReference type="PANTHER" id="PTHR36510:SF1">
    <property type="entry name" value="GLUTAMATE--CYSTEINE LIGASE 2-RELATED"/>
    <property type="match status" value="1"/>
</dbReference>
<dbReference type="Pfam" id="PF04107">
    <property type="entry name" value="GCS2"/>
    <property type="match status" value="1"/>
</dbReference>
<dbReference type="SUPFAM" id="SSF55931">
    <property type="entry name" value="Glutamine synthetase/guanido kinase"/>
    <property type="match status" value="1"/>
</dbReference>
<feature type="chain" id="PRO_0000291480" description="Putative glutamate--cysteine ligase 2">
    <location>
        <begin position="1"/>
        <end position="387"/>
    </location>
</feature>
<reference key="1">
    <citation type="journal article" date="2014" name="Stand. Genomic Sci.">
        <title>Complete genome sequence of Anabaena variabilis ATCC 29413.</title>
        <authorList>
            <person name="Thiel T."/>
            <person name="Pratte B.S."/>
            <person name="Zhong J."/>
            <person name="Goodwin L."/>
            <person name="Copeland A."/>
            <person name="Lucas S."/>
            <person name="Han C."/>
            <person name="Pitluck S."/>
            <person name="Land M.L."/>
            <person name="Kyrpides N.C."/>
            <person name="Woyke T."/>
        </authorList>
    </citation>
    <scope>NUCLEOTIDE SEQUENCE [LARGE SCALE GENOMIC DNA]</scope>
    <source>
        <strain>ATCC 29413 / PCC 7937</strain>
    </source>
</reference>
<protein>
    <recommendedName>
        <fullName evidence="1">Putative glutamate--cysteine ligase 2</fullName>
        <ecNumber evidence="1">6.3.2.2</ecNumber>
    </recommendedName>
    <alternativeName>
        <fullName evidence="1">Gamma-glutamylcysteine synthetase 2</fullName>
        <shortName evidence="1">GCS 2</shortName>
        <shortName evidence="1">Gamma-GCS 2</shortName>
    </alternativeName>
</protein>